<accession>B7N3F5</accession>
<reference key="1">
    <citation type="journal article" date="2009" name="PLoS Genet.">
        <title>Organised genome dynamics in the Escherichia coli species results in highly diverse adaptive paths.</title>
        <authorList>
            <person name="Touchon M."/>
            <person name="Hoede C."/>
            <person name="Tenaillon O."/>
            <person name="Barbe V."/>
            <person name="Baeriswyl S."/>
            <person name="Bidet P."/>
            <person name="Bingen E."/>
            <person name="Bonacorsi S."/>
            <person name="Bouchier C."/>
            <person name="Bouvet O."/>
            <person name="Calteau A."/>
            <person name="Chiapello H."/>
            <person name="Clermont O."/>
            <person name="Cruveiller S."/>
            <person name="Danchin A."/>
            <person name="Diard M."/>
            <person name="Dossat C."/>
            <person name="Karoui M.E."/>
            <person name="Frapy E."/>
            <person name="Garry L."/>
            <person name="Ghigo J.M."/>
            <person name="Gilles A.M."/>
            <person name="Johnson J."/>
            <person name="Le Bouguenec C."/>
            <person name="Lescat M."/>
            <person name="Mangenot S."/>
            <person name="Martinez-Jehanne V."/>
            <person name="Matic I."/>
            <person name="Nassif X."/>
            <person name="Oztas S."/>
            <person name="Petit M.A."/>
            <person name="Pichon C."/>
            <person name="Rouy Z."/>
            <person name="Ruf C.S."/>
            <person name="Schneider D."/>
            <person name="Tourret J."/>
            <person name="Vacherie B."/>
            <person name="Vallenet D."/>
            <person name="Medigue C."/>
            <person name="Rocha E.P.C."/>
            <person name="Denamur E."/>
        </authorList>
    </citation>
    <scope>NUCLEOTIDE SEQUENCE [LARGE SCALE GENOMIC DNA]</scope>
    <source>
        <strain>UMN026 / ExPEC</strain>
    </source>
</reference>
<proteinExistence type="inferred from homology"/>
<protein>
    <recommendedName>
        <fullName evidence="1">Curved DNA-binding protein</fullName>
    </recommendedName>
</protein>
<gene>
    <name evidence="1" type="primary">cbpA</name>
    <name type="ordered locus">ECUMN_1182</name>
</gene>
<evidence type="ECO:0000255" key="1">
    <source>
        <dbReference type="HAMAP-Rule" id="MF_01154"/>
    </source>
</evidence>
<name>CBPA_ECOLU</name>
<sequence>MELKDYYAIMGVKPTDDLKTIKTAYRRLARKYHPDVSKEPDAEARFKEVAEAWEVLSDEQRRAEYDQMWQHRNDPQFSRQFQHGDGQSFNAEDFDDIFSSIFGQHARQSRQRPATRGHDIEIEVAVFLEETLTEHKRTISYNLPVYNAFGMIEQEIPKTLNVKIPAGVGNGQRIRLKGQGTPGENGGPNGDLWLVIHIAPHPLFDIVGQDLEIVVPVSPWEAALGAKVTVPTLKESILLTIPPGSQAGQRLRVKGKGLVSKKQTGDLYAVLKIVMPPKPDENTAALWQQLADAQSSFDPRKDWGKA</sequence>
<comment type="function">
    <text evidence="1">DNA-binding protein that preferentially recognizes a curved DNA sequence. It is probably a functional analog of DnaJ; displays overlapping activities with DnaJ, but functions under different conditions, probably acting as a molecular chaperone in an adaptive response to environmental stresses other than heat shock. Lacks autonomous chaperone activity; binds native substrates and targets them for recognition by DnaK. Its activity is inhibited by the binding of CbpM.</text>
</comment>
<comment type="subcellular location">
    <subcellularLocation>
        <location evidence="1">Cytoplasm</location>
        <location evidence="1">Nucleoid</location>
    </subcellularLocation>
</comment>
<feature type="chain" id="PRO_1000137750" description="Curved DNA-binding protein">
    <location>
        <begin position="1"/>
        <end position="306"/>
    </location>
</feature>
<feature type="domain" description="J" evidence="1">
    <location>
        <begin position="5"/>
        <end position="69"/>
    </location>
</feature>
<keyword id="KW-0143">Chaperone</keyword>
<keyword id="KW-0963">Cytoplasm</keyword>
<keyword id="KW-0238">DNA-binding</keyword>
<organism>
    <name type="scientific">Escherichia coli O17:K52:H18 (strain UMN026 / ExPEC)</name>
    <dbReference type="NCBI Taxonomy" id="585056"/>
    <lineage>
        <taxon>Bacteria</taxon>
        <taxon>Pseudomonadati</taxon>
        <taxon>Pseudomonadota</taxon>
        <taxon>Gammaproteobacteria</taxon>
        <taxon>Enterobacterales</taxon>
        <taxon>Enterobacteriaceae</taxon>
        <taxon>Escherichia</taxon>
    </lineage>
</organism>
<dbReference type="EMBL" id="CU928163">
    <property type="protein sequence ID" value="CAR12391.1"/>
    <property type="molecule type" value="Genomic_DNA"/>
</dbReference>
<dbReference type="RefSeq" id="WP_000420641.1">
    <property type="nucleotide sequence ID" value="NC_011751.1"/>
</dbReference>
<dbReference type="RefSeq" id="YP_002411935.1">
    <property type="nucleotide sequence ID" value="NC_011751.1"/>
</dbReference>
<dbReference type="SMR" id="B7N3F5"/>
<dbReference type="STRING" id="585056.ECUMN_1182"/>
<dbReference type="KEGG" id="eum:ECUMN_1182"/>
<dbReference type="PATRIC" id="fig|585056.7.peg.1379"/>
<dbReference type="HOGENOM" id="CLU_017633_0_0_6"/>
<dbReference type="Proteomes" id="UP000007097">
    <property type="component" value="Chromosome"/>
</dbReference>
<dbReference type="GO" id="GO:0005737">
    <property type="term" value="C:cytoplasm"/>
    <property type="evidence" value="ECO:0007669"/>
    <property type="project" value="UniProtKB-UniRule"/>
</dbReference>
<dbReference type="GO" id="GO:0009295">
    <property type="term" value="C:nucleoid"/>
    <property type="evidence" value="ECO:0007669"/>
    <property type="project" value="UniProtKB-SubCell"/>
</dbReference>
<dbReference type="GO" id="GO:0003681">
    <property type="term" value="F:bent DNA binding"/>
    <property type="evidence" value="ECO:0007669"/>
    <property type="project" value="UniProtKB-UniRule"/>
</dbReference>
<dbReference type="GO" id="GO:0051082">
    <property type="term" value="F:unfolded protein binding"/>
    <property type="evidence" value="ECO:0007669"/>
    <property type="project" value="InterPro"/>
</dbReference>
<dbReference type="GO" id="GO:0051085">
    <property type="term" value="P:chaperone cofactor-dependent protein refolding"/>
    <property type="evidence" value="ECO:0007669"/>
    <property type="project" value="TreeGrafter"/>
</dbReference>
<dbReference type="GO" id="GO:0042026">
    <property type="term" value="P:protein refolding"/>
    <property type="evidence" value="ECO:0007669"/>
    <property type="project" value="TreeGrafter"/>
</dbReference>
<dbReference type="CDD" id="cd06257">
    <property type="entry name" value="DnaJ"/>
    <property type="match status" value="1"/>
</dbReference>
<dbReference type="CDD" id="cd10747">
    <property type="entry name" value="DnaJ_C"/>
    <property type="match status" value="1"/>
</dbReference>
<dbReference type="FunFam" id="1.10.287.110:FF:000013">
    <property type="entry name" value="Curved DNA-binding protein"/>
    <property type="match status" value="1"/>
</dbReference>
<dbReference type="FunFam" id="2.60.260.20:FF:000008">
    <property type="entry name" value="Curved DNA-binding protein"/>
    <property type="match status" value="1"/>
</dbReference>
<dbReference type="FunFam" id="2.60.260.20:FF:000010">
    <property type="entry name" value="Curved DNA-binding protein"/>
    <property type="match status" value="1"/>
</dbReference>
<dbReference type="Gene3D" id="1.10.287.110">
    <property type="entry name" value="DnaJ domain"/>
    <property type="match status" value="1"/>
</dbReference>
<dbReference type="Gene3D" id="1.20.5.460">
    <property type="entry name" value="Single helix bin"/>
    <property type="match status" value="1"/>
</dbReference>
<dbReference type="Gene3D" id="2.60.260.20">
    <property type="entry name" value="Urease metallochaperone UreE, N-terminal domain"/>
    <property type="match status" value="2"/>
</dbReference>
<dbReference type="HAMAP" id="MF_01154">
    <property type="entry name" value="CbpA"/>
    <property type="match status" value="1"/>
</dbReference>
<dbReference type="InterPro" id="IPR023859">
    <property type="entry name" value="DNA-bd_curved-DNA"/>
</dbReference>
<dbReference type="InterPro" id="IPR002939">
    <property type="entry name" value="DnaJ_C"/>
</dbReference>
<dbReference type="InterPro" id="IPR001623">
    <property type="entry name" value="DnaJ_domain"/>
</dbReference>
<dbReference type="InterPro" id="IPR018253">
    <property type="entry name" value="DnaJ_domain_CS"/>
</dbReference>
<dbReference type="InterPro" id="IPR008971">
    <property type="entry name" value="HSP40/DnaJ_pept-bd"/>
</dbReference>
<dbReference type="InterPro" id="IPR036869">
    <property type="entry name" value="J_dom_sf"/>
</dbReference>
<dbReference type="NCBIfam" id="NF007618">
    <property type="entry name" value="PRK10266.1"/>
    <property type="match status" value="1"/>
</dbReference>
<dbReference type="PANTHER" id="PTHR43096">
    <property type="entry name" value="DNAJ HOMOLOG 1, MITOCHONDRIAL-RELATED"/>
    <property type="match status" value="1"/>
</dbReference>
<dbReference type="PANTHER" id="PTHR43096:SF52">
    <property type="entry name" value="DNAJ HOMOLOG 1, MITOCHONDRIAL-RELATED"/>
    <property type="match status" value="1"/>
</dbReference>
<dbReference type="Pfam" id="PF00226">
    <property type="entry name" value="DnaJ"/>
    <property type="match status" value="1"/>
</dbReference>
<dbReference type="Pfam" id="PF01556">
    <property type="entry name" value="DnaJ_C"/>
    <property type="match status" value="1"/>
</dbReference>
<dbReference type="PRINTS" id="PR00625">
    <property type="entry name" value="JDOMAIN"/>
</dbReference>
<dbReference type="SMART" id="SM00271">
    <property type="entry name" value="DnaJ"/>
    <property type="match status" value="1"/>
</dbReference>
<dbReference type="SUPFAM" id="SSF46565">
    <property type="entry name" value="Chaperone J-domain"/>
    <property type="match status" value="1"/>
</dbReference>
<dbReference type="SUPFAM" id="SSF49493">
    <property type="entry name" value="HSP40/DnaJ peptide-binding domain"/>
    <property type="match status" value="2"/>
</dbReference>
<dbReference type="PROSITE" id="PS00636">
    <property type="entry name" value="DNAJ_1"/>
    <property type="match status" value="1"/>
</dbReference>
<dbReference type="PROSITE" id="PS50076">
    <property type="entry name" value="DNAJ_2"/>
    <property type="match status" value="1"/>
</dbReference>